<accession>P09735</accession>
<organism>
    <name type="scientific">Marchantia polymorpha</name>
    <name type="common">Common liverwort</name>
    <name type="synonym">Marchantia aquatica</name>
    <dbReference type="NCBI Taxonomy" id="3197"/>
    <lineage>
        <taxon>Eukaryota</taxon>
        <taxon>Viridiplantae</taxon>
        <taxon>Streptophyta</taxon>
        <taxon>Embryophyta</taxon>
        <taxon>Marchantiophyta</taxon>
        <taxon>Marchantiopsida</taxon>
        <taxon>Marchantiidae</taxon>
        <taxon>Marchantiales</taxon>
        <taxon>Marchantiaceae</taxon>
        <taxon>Marchantia</taxon>
    </lineage>
</organism>
<comment type="function">
    <text>Ferredoxins are iron-sulfur proteins that transfer electrons in a wide variety of metabolic reactions.</text>
</comment>
<comment type="cofactor">
    <cofactor>
        <name>[2Fe-2S] cluster</name>
        <dbReference type="ChEBI" id="CHEBI:190135"/>
    </cofactor>
    <text>Binds 1 [2Fe-2S] cluster.</text>
</comment>
<comment type="subcellular location">
    <subcellularLocation>
        <location>Plastid</location>
        <location>Chloroplast</location>
    </subcellularLocation>
</comment>
<comment type="similarity">
    <text evidence="2">Belongs to the 2Fe2S plant-type ferredoxin family.</text>
</comment>
<dbReference type="PIR" id="A24126">
    <property type="entry name" value="FELV"/>
</dbReference>
<dbReference type="SMR" id="P09735"/>
<dbReference type="GO" id="GO:0009507">
    <property type="term" value="C:chloroplast"/>
    <property type="evidence" value="ECO:0007669"/>
    <property type="project" value="UniProtKB-SubCell"/>
</dbReference>
<dbReference type="GO" id="GO:0051537">
    <property type="term" value="F:2 iron, 2 sulfur cluster binding"/>
    <property type="evidence" value="ECO:0007669"/>
    <property type="project" value="UniProtKB-KW"/>
</dbReference>
<dbReference type="GO" id="GO:0009055">
    <property type="term" value="F:electron transfer activity"/>
    <property type="evidence" value="ECO:0007669"/>
    <property type="project" value="InterPro"/>
</dbReference>
<dbReference type="GO" id="GO:0046872">
    <property type="term" value="F:metal ion binding"/>
    <property type="evidence" value="ECO:0007669"/>
    <property type="project" value="UniProtKB-KW"/>
</dbReference>
<dbReference type="GO" id="GO:0022900">
    <property type="term" value="P:electron transport chain"/>
    <property type="evidence" value="ECO:0007669"/>
    <property type="project" value="InterPro"/>
</dbReference>
<dbReference type="CDD" id="cd00207">
    <property type="entry name" value="fer2"/>
    <property type="match status" value="1"/>
</dbReference>
<dbReference type="FunFam" id="3.10.20.30:FF:000014">
    <property type="entry name" value="Ferredoxin"/>
    <property type="match status" value="1"/>
</dbReference>
<dbReference type="Gene3D" id="3.10.20.30">
    <property type="match status" value="1"/>
</dbReference>
<dbReference type="InterPro" id="IPR036010">
    <property type="entry name" value="2Fe-2S_ferredoxin-like_sf"/>
</dbReference>
<dbReference type="InterPro" id="IPR001041">
    <property type="entry name" value="2Fe-2S_ferredoxin-type"/>
</dbReference>
<dbReference type="InterPro" id="IPR006058">
    <property type="entry name" value="2Fe2S_fd_BS"/>
</dbReference>
<dbReference type="InterPro" id="IPR012675">
    <property type="entry name" value="Beta-grasp_dom_sf"/>
</dbReference>
<dbReference type="InterPro" id="IPR010241">
    <property type="entry name" value="Fd_pln"/>
</dbReference>
<dbReference type="NCBIfam" id="TIGR02008">
    <property type="entry name" value="fdx_plant"/>
    <property type="match status" value="1"/>
</dbReference>
<dbReference type="PANTHER" id="PTHR43112">
    <property type="entry name" value="FERREDOXIN"/>
    <property type="match status" value="1"/>
</dbReference>
<dbReference type="PANTHER" id="PTHR43112:SF3">
    <property type="entry name" value="FERREDOXIN-2, CHLOROPLASTIC"/>
    <property type="match status" value="1"/>
</dbReference>
<dbReference type="Pfam" id="PF00111">
    <property type="entry name" value="Fer2"/>
    <property type="match status" value="1"/>
</dbReference>
<dbReference type="SUPFAM" id="SSF54292">
    <property type="entry name" value="2Fe-2S ferredoxin-like"/>
    <property type="match status" value="1"/>
</dbReference>
<dbReference type="PROSITE" id="PS00197">
    <property type="entry name" value="2FE2S_FER_1"/>
    <property type="match status" value="1"/>
</dbReference>
<dbReference type="PROSITE" id="PS51085">
    <property type="entry name" value="2FE2S_FER_2"/>
    <property type="match status" value="1"/>
</dbReference>
<sequence>TFKVTLNTPTGQSVIDVEDDEYILDAAEEAGLSLPYSCRAGACSSCAGKVTAGEVDQSDESFLDDDQMDEGYVLTCIAYPTSDLTIDTHQEEALI</sequence>
<evidence type="ECO:0000255" key="1">
    <source>
        <dbReference type="PROSITE-ProRule" id="PRU00465"/>
    </source>
</evidence>
<evidence type="ECO:0000305" key="2"/>
<name>FER_MARPO</name>
<reference key="1">
    <citation type="journal article" date="1985" name="J. Biochem.">
        <title>Ferredoxin from a liverwort, Marchantia polymorpha. Purification and amino acid sequence.</title>
        <authorList>
            <person name="Minami Y."/>
            <person name="Wakabayashi S."/>
            <person name="Imoto S."/>
            <person name="Ohta Y."/>
            <person name="Matsubara H."/>
        </authorList>
    </citation>
    <scope>PROTEIN SEQUENCE</scope>
</reference>
<keyword id="KW-0001">2Fe-2S</keyword>
<keyword id="KW-0150">Chloroplast</keyword>
<keyword id="KW-0903">Direct protein sequencing</keyword>
<keyword id="KW-0249">Electron transport</keyword>
<keyword id="KW-0408">Iron</keyword>
<keyword id="KW-0411">Iron-sulfur</keyword>
<keyword id="KW-0479">Metal-binding</keyword>
<keyword id="KW-0934">Plastid</keyword>
<keyword id="KW-0813">Transport</keyword>
<feature type="chain" id="PRO_0000189339" description="Ferredoxin">
    <location>
        <begin position="1"/>
        <end position="95"/>
    </location>
</feature>
<feature type="domain" description="2Fe-2S ferredoxin-type" evidence="1">
    <location>
        <begin position="2"/>
        <end position="92"/>
    </location>
</feature>
<feature type="binding site" evidence="1">
    <location>
        <position position="38"/>
    </location>
    <ligand>
        <name>[2Fe-2S] cluster</name>
        <dbReference type="ChEBI" id="CHEBI:190135"/>
    </ligand>
</feature>
<feature type="binding site" evidence="1">
    <location>
        <position position="43"/>
    </location>
    <ligand>
        <name>[2Fe-2S] cluster</name>
        <dbReference type="ChEBI" id="CHEBI:190135"/>
    </ligand>
</feature>
<feature type="binding site" evidence="1">
    <location>
        <position position="46"/>
    </location>
    <ligand>
        <name>[2Fe-2S] cluster</name>
        <dbReference type="ChEBI" id="CHEBI:190135"/>
    </ligand>
</feature>
<feature type="binding site" evidence="1">
    <location>
        <position position="76"/>
    </location>
    <ligand>
        <name>[2Fe-2S] cluster</name>
        <dbReference type="ChEBI" id="CHEBI:190135"/>
    </ligand>
</feature>
<protein>
    <recommendedName>
        <fullName>Ferredoxin</fullName>
    </recommendedName>
</protein>
<proteinExistence type="evidence at protein level"/>